<sequence>VVGGDECNINEHRFLVALYANSSLLCGGTLINQEWVLIAAHCDR</sequence>
<reference key="1">
    <citation type="journal article" date="2006" name="Protein J.">
        <title>Characterization of a new platelet aggregating factor from crotoxin Crotalus durissus cascavella venom.</title>
        <authorList>
            <person name="Fonseca F.V."/>
            <person name="Antunes E."/>
            <person name="Morganti R.P."/>
            <person name="Monteiro H.S."/>
            <person name="Martins A.M."/>
            <person name="Toyama D.O."/>
            <person name="Marangoni S."/>
            <person name="Toyama M.H."/>
        </authorList>
    </citation>
    <scope>PROTEIN SEQUENCE</scope>
    <scope>FUNCTION</scope>
    <scope>BIOPHYSICOCHEMICAL PROPERTIES</scope>
    <scope>DISULFIDE BONDS</scope>
    <source>
        <tissue>Venom</tissue>
    </source>
</reference>
<organism>
    <name type="scientific">Crotalus durissus cascavella</name>
    <name type="common">Northeastern Brazilian rattlesnake</name>
    <dbReference type="NCBI Taxonomy" id="184540"/>
    <lineage>
        <taxon>Eukaryota</taxon>
        <taxon>Metazoa</taxon>
        <taxon>Chordata</taxon>
        <taxon>Craniata</taxon>
        <taxon>Vertebrata</taxon>
        <taxon>Euteleostomi</taxon>
        <taxon>Lepidosauria</taxon>
        <taxon>Squamata</taxon>
        <taxon>Bifurcata</taxon>
        <taxon>Unidentata</taxon>
        <taxon>Episquamata</taxon>
        <taxon>Toxicofera</taxon>
        <taxon>Serpentes</taxon>
        <taxon>Colubroidea</taxon>
        <taxon>Viperidae</taxon>
        <taxon>Crotalinae</taxon>
        <taxon>Crotalus</taxon>
    </lineage>
</organism>
<accession>P0DKY5</accession>
<dbReference type="EC" id="3.4.21.-"/>
<dbReference type="SMR" id="P0DKY5"/>
<dbReference type="SABIO-RK" id="P0DKY5"/>
<dbReference type="GO" id="GO:0005615">
    <property type="term" value="C:extracellular space"/>
    <property type="evidence" value="ECO:0007669"/>
    <property type="project" value="TreeGrafter"/>
</dbReference>
<dbReference type="GO" id="GO:0004252">
    <property type="term" value="F:serine-type endopeptidase activity"/>
    <property type="evidence" value="ECO:0007669"/>
    <property type="project" value="InterPro"/>
</dbReference>
<dbReference type="GO" id="GO:0090729">
    <property type="term" value="F:toxin activity"/>
    <property type="evidence" value="ECO:0007669"/>
    <property type="project" value="UniProtKB-KW"/>
</dbReference>
<dbReference type="GO" id="GO:0006508">
    <property type="term" value="P:proteolysis"/>
    <property type="evidence" value="ECO:0007669"/>
    <property type="project" value="UniProtKB-KW"/>
</dbReference>
<dbReference type="Gene3D" id="2.40.10.10">
    <property type="entry name" value="Trypsin-like serine proteases"/>
    <property type="match status" value="1"/>
</dbReference>
<dbReference type="InterPro" id="IPR009003">
    <property type="entry name" value="Peptidase_S1_PA"/>
</dbReference>
<dbReference type="InterPro" id="IPR043504">
    <property type="entry name" value="Peptidase_S1_PA_chymotrypsin"/>
</dbReference>
<dbReference type="InterPro" id="IPR050127">
    <property type="entry name" value="Serine_Proteases_S1"/>
</dbReference>
<dbReference type="InterPro" id="IPR001254">
    <property type="entry name" value="Trypsin_dom"/>
</dbReference>
<dbReference type="PANTHER" id="PTHR24264:SF65">
    <property type="entry name" value="SRCR DOMAIN-CONTAINING PROTEIN"/>
    <property type="match status" value="1"/>
</dbReference>
<dbReference type="PANTHER" id="PTHR24264">
    <property type="entry name" value="TRYPSIN-RELATED"/>
    <property type="match status" value="1"/>
</dbReference>
<dbReference type="Pfam" id="PF00089">
    <property type="entry name" value="Trypsin"/>
    <property type="match status" value="1"/>
</dbReference>
<dbReference type="SUPFAM" id="SSF50494">
    <property type="entry name" value="Trypsin-like serine proteases"/>
    <property type="match status" value="1"/>
</dbReference>
<evidence type="ECO:0000250" key="1"/>
<evidence type="ECO:0000255" key="2">
    <source>
        <dbReference type="PROSITE-ProRule" id="PRU00274"/>
    </source>
</evidence>
<evidence type="ECO:0000255" key="3">
    <source>
        <dbReference type="PROSITE-ProRule" id="PRU10078"/>
    </source>
</evidence>
<evidence type="ECO:0000255" key="4">
    <source>
        <dbReference type="PROSITE-ProRule" id="PRU10079"/>
    </source>
</evidence>
<evidence type="ECO:0000269" key="5">
    <source>
    </source>
</evidence>
<evidence type="ECO:0000305" key="6">
    <source>
    </source>
</evidence>
<feature type="chain" id="PRO_0000421798" description="Thrombin-like enzyme F202">
    <location>
        <begin position="1"/>
        <end position="44" status="greater than"/>
    </location>
</feature>
<feature type="domain" description="Peptidase S1" evidence="2">
    <location>
        <begin position="1"/>
        <end position="44" status="greater than"/>
    </location>
</feature>
<feature type="active site" description="Charge relay system" evidence="2 3 4">
    <location>
        <position position="41"/>
    </location>
</feature>
<feature type="disulfide bond" evidence="2">
    <location>
        <begin position="7"/>
        <end status="unknown"/>
    </location>
</feature>
<feature type="disulfide bond" evidence="2">
    <location>
        <begin position="26"/>
        <end position="42"/>
    </location>
</feature>
<feature type="non-terminal residue">
    <location>
        <position position="44"/>
    </location>
</feature>
<name>VSP_CRODC</name>
<protein>
    <recommendedName>
        <fullName>Thrombin-like enzyme F202</fullName>
        <shortName>SVTLE</shortName>
        <ecNumber>3.4.21.-</ecNumber>
    </recommendedName>
    <alternativeName>
        <fullName>Fibrinogen-clotting enzyme</fullName>
    </alternativeName>
    <alternativeName>
        <fullName>Snake venom serine protease</fullName>
        <shortName>SVSP</shortName>
    </alternativeName>
</protein>
<proteinExistence type="evidence at protein level"/>
<comment type="function">
    <text evidence="5">Thrombin-like snake venom serine protease that coagulates fibrinogen by inducing a fast degradation of the alpha chain (FGA) from human citrated plasma, and a slow degradation of beta chain (FGB). Potently induces platelet aggregation in both platelet rich plasma and washed platelet preparations in a concentration-dependent fashion. Shows amidolytic activities.</text>
</comment>
<comment type="activity regulation">
    <text>Enzyme activity is markedly inhibited by TLCK and PMSF, and moderately by SBTi. Platelet aggregating activity is strongly inhibited by TLCK.</text>
</comment>
<comment type="biophysicochemical properties">
    <kinetics>
        <KM evidence="5">0.58 mM for BApNA</KM>
        <Vmax evidence="5">5.64 umol/min/mg enzyme</Vmax>
    </kinetics>
</comment>
<comment type="subunit">
    <text evidence="1">Monomer.</text>
</comment>
<comment type="subcellular location">
    <subcellularLocation>
        <location>Secreted</location>
    </subcellularLocation>
</comment>
<comment type="tissue specificity">
    <text>Expressed by the venom gland.</text>
</comment>
<comment type="PTM">
    <text>Contains 6 disulfide bonds.</text>
</comment>
<comment type="miscellaneous">
    <text evidence="6">Negative results: does not affect the gamma chain of fibrinogen (FGG).</text>
</comment>
<comment type="similarity">
    <text evidence="2">Belongs to the peptidase S1 family. Snake venom subfamily.</text>
</comment>
<keyword id="KW-1204">Blood coagulation cascade activating toxin</keyword>
<keyword id="KW-0903">Direct protein sequencing</keyword>
<keyword id="KW-1015">Disulfide bond</keyword>
<keyword id="KW-1206">Fibrinogenolytic toxin</keyword>
<keyword id="KW-1199">Hemostasis impairing toxin</keyword>
<keyword id="KW-0378">Hydrolase</keyword>
<keyword id="KW-1202">Platelet aggregation activating toxin</keyword>
<keyword id="KW-0645">Protease</keyword>
<keyword id="KW-0964">Secreted</keyword>
<keyword id="KW-0720">Serine protease</keyword>
<keyword id="KW-0800">Toxin</keyword>